<protein>
    <recommendedName>
        <fullName evidence="1">Peptide methionine sulfoxide reductase MsrA</fullName>
        <shortName evidence="1">Protein-methionine-S-oxide reductase</shortName>
        <ecNumber evidence="1">1.8.4.11</ecNumber>
    </recommendedName>
    <alternativeName>
        <fullName evidence="1">Peptide-methionine (S)-S-oxide reductase</fullName>
        <shortName evidence="1">Peptide Met(O) reductase</shortName>
    </alternativeName>
</protein>
<organism>
    <name type="scientific">Pseudomonas putida (strain W619)</name>
    <dbReference type="NCBI Taxonomy" id="390235"/>
    <lineage>
        <taxon>Bacteria</taxon>
        <taxon>Pseudomonadati</taxon>
        <taxon>Pseudomonadota</taxon>
        <taxon>Gammaproteobacteria</taxon>
        <taxon>Pseudomonadales</taxon>
        <taxon>Pseudomonadaceae</taxon>
        <taxon>Pseudomonas</taxon>
    </lineage>
</organism>
<name>MSRA_PSEPW</name>
<comment type="function">
    <text evidence="1">Has an important function as a repair enzyme for proteins that have been inactivated by oxidation. Catalyzes the reversible oxidation-reduction of methionine sulfoxide in proteins to methionine.</text>
</comment>
<comment type="catalytic activity">
    <reaction evidence="1">
        <text>L-methionyl-[protein] + [thioredoxin]-disulfide + H2O = L-methionyl-(S)-S-oxide-[protein] + [thioredoxin]-dithiol</text>
        <dbReference type="Rhea" id="RHEA:14217"/>
        <dbReference type="Rhea" id="RHEA-COMP:10698"/>
        <dbReference type="Rhea" id="RHEA-COMP:10700"/>
        <dbReference type="Rhea" id="RHEA-COMP:12313"/>
        <dbReference type="Rhea" id="RHEA-COMP:12315"/>
        <dbReference type="ChEBI" id="CHEBI:15377"/>
        <dbReference type="ChEBI" id="CHEBI:16044"/>
        <dbReference type="ChEBI" id="CHEBI:29950"/>
        <dbReference type="ChEBI" id="CHEBI:44120"/>
        <dbReference type="ChEBI" id="CHEBI:50058"/>
        <dbReference type="EC" id="1.8.4.11"/>
    </reaction>
</comment>
<comment type="catalytic activity">
    <reaction evidence="1">
        <text>[thioredoxin]-disulfide + L-methionine + H2O = L-methionine (S)-S-oxide + [thioredoxin]-dithiol</text>
        <dbReference type="Rhea" id="RHEA:19993"/>
        <dbReference type="Rhea" id="RHEA-COMP:10698"/>
        <dbReference type="Rhea" id="RHEA-COMP:10700"/>
        <dbReference type="ChEBI" id="CHEBI:15377"/>
        <dbReference type="ChEBI" id="CHEBI:29950"/>
        <dbReference type="ChEBI" id="CHEBI:50058"/>
        <dbReference type="ChEBI" id="CHEBI:57844"/>
        <dbReference type="ChEBI" id="CHEBI:58772"/>
        <dbReference type="EC" id="1.8.4.11"/>
    </reaction>
</comment>
<comment type="similarity">
    <text evidence="1">Belongs to the MsrA Met sulfoxide reductase family.</text>
</comment>
<accession>B1JE82</accession>
<sequence length="222" mass="24601">MVLRSEILVNKNVMPTAEQALPGRETPMSLPEFHYVFKDTPLLGPFFEGSIDFAIFGLGCFWGAERRFWQREGVVSTVVGYAGGFTPNPTYEEVCSGLTGHTEVVLVVFDKDKVSYRELLAMFWELHNPTQGMRQGNDVGTQYRSAIYCTSPQQLEEAKASRDAFQAELNKAGYGEITTEIDQAPTVYFAEAYHQQYLAKNPDGYCGIGGTGVCLPPSLQGN</sequence>
<keyword id="KW-0560">Oxidoreductase</keyword>
<feature type="chain" id="PRO_1000145426" description="Peptide methionine sulfoxide reductase MsrA">
    <location>
        <begin position="1"/>
        <end position="222"/>
    </location>
</feature>
<feature type="active site" evidence="1">
    <location>
        <position position="60"/>
    </location>
</feature>
<reference key="1">
    <citation type="submission" date="2008-02" db="EMBL/GenBank/DDBJ databases">
        <title>Complete sequence of Pseudomonas putida W619.</title>
        <authorList>
            <person name="Copeland A."/>
            <person name="Lucas S."/>
            <person name="Lapidus A."/>
            <person name="Barry K."/>
            <person name="Detter J.C."/>
            <person name="Glavina del Rio T."/>
            <person name="Dalin E."/>
            <person name="Tice H."/>
            <person name="Pitluck S."/>
            <person name="Chain P."/>
            <person name="Malfatti S."/>
            <person name="Shin M."/>
            <person name="Vergez L."/>
            <person name="Schmutz J."/>
            <person name="Larimer F."/>
            <person name="Land M."/>
            <person name="Hauser L."/>
            <person name="Kyrpides N."/>
            <person name="Kim E."/>
            <person name="Taghavi S."/>
            <person name="Vangronsveld D."/>
            <person name="van der Lelie D."/>
            <person name="Richardson P."/>
        </authorList>
    </citation>
    <scope>NUCLEOTIDE SEQUENCE [LARGE SCALE GENOMIC DNA]</scope>
    <source>
        <strain>W619</strain>
    </source>
</reference>
<evidence type="ECO:0000255" key="1">
    <source>
        <dbReference type="HAMAP-Rule" id="MF_01401"/>
    </source>
</evidence>
<dbReference type="EC" id="1.8.4.11" evidence="1"/>
<dbReference type="EMBL" id="CP000949">
    <property type="protein sequence ID" value="ACA75343.1"/>
    <property type="molecule type" value="Genomic_DNA"/>
</dbReference>
<dbReference type="SMR" id="B1JE82"/>
<dbReference type="STRING" id="390235.PputW619_4867"/>
<dbReference type="KEGG" id="ppw:PputW619_4867"/>
<dbReference type="eggNOG" id="COG0225">
    <property type="taxonomic scope" value="Bacteria"/>
</dbReference>
<dbReference type="HOGENOM" id="CLU_031040_10_3_6"/>
<dbReference type="OrthoDB" id="4174719at2"/>
<dbReference type="GO" id="GO:0005737">
    <property type="term" value="C:cytoplasm"/>
    <property type="evidence" value="ECO:0007669"/>
    <property type="project" value="TreeGrafter"/>
</dbReference>
<dbReference type="GO" id="GO:0036456">
    <property type="term" value="F:L-methionine-(S)-S-oxide reductase activity"/>
    <property type="evidence" value="ECO:0007669"/>
    <property type="project" value="TreeGrafter"/>
</dbReference>
<dbReference type="GO" id="GO:0008113">
    <property type="term" value="F:peptide-methionine (S)-S-oxide reductase activity"/>
    <property type="evidence" value="ECO:0007669"/>
    <property type="project" value="UniProtKB-UniRule"/>
</dbReference>
<dbReference type="GO" id="GO:0034599">
    <property type="term" value="P:cellular response to oxidative stress"/>
    <property type="evidence" value="ECO:0007669"/>
    <property type="project" value="TreeGrafter"/>
</dbReference>
<dbReference type="GO" id="GO:0036211">
    <property type="term" value="P:protein modification process"/>
    <property type="evidence" value="ECO:0007669"/>
    <property type="project" value="UniProtKB-UniRule"/>
</dbReference>
<dbReference type="FunFam" id="3.30.1060.10:FF:000001">
    <property type="entry name" value="Peptide methionine sulfoxide reductase MsrA"/>
    <property type="match status" value="1"/>
</dbReference>
<dbReference type="Gene3D" id="3.30.1060.10">
    <property type="entry name" value="Peptide methionine sulphoxide reductase MsrA"/>
    <property type="match status" value="1"/>
</dbReference>
<dbReference type="HAMAP" id="MF_01401">
    <property type="entry name" value="MsrA"/>
    <property type="match status" value="1"/>
</dbReference>
<dbReference type="InterPro" id="IPR002569">
    <property type="entry name" value="Met_Sox_Rdtase_MsrA_dom"/>
</dbReference>
<dbReference type="InterPro" id="IPR036509">
    <property type="entry name" value="Met_Sox_Rdtase_MsrA_sf"/>
</dbReference>
<dbReference type="InterPro" id="IPR050162">
    <property type="entry name" value="MsrA_MetSO_reductase"/>
</dbReference>
<dbReference type="NCBIfam" id="TIGR00401">
    <property type="entry name" value="msrA"/>
    <property type="match status" value="1"/>
</dbReference>
<dbReference type="PANTHER" id="PTHR42799">
    <property type="entry name" value="MITOCHONDRIAL PEPTIDE METHIONINE SULFOXIDE REDUCTASE"/>
    <property type="match status" value="1"/>
</dbReference>
<dbReference type="PANTHER" id="PTHR42799:SF2">
    <property type="entry name" value="MITOCHONDRIAL PEPTIDE METHIONINE SULFOXIDE REDUCTASE"/>
    <property type="match status" value="1"/>
</dbReference>
<dbReference type="Pfam" id="PF01625">
    <property type="entry name" value="PMSR"/>
    <property type="match status" value="1"/>
</dbReference>
<dbReference type="SUPFAM" id="SSF55068">
    <property type="entry name" value="Peptide methionine sulfoxide reductase"/>
    <property type="match status" value="1"/>
</dbReference>
<gene>
    <name evidence="1" type="primary">msrA</name>
    <name type="ordered locus">PputW619_4867</name>
</gene>
<proteinExistence type="inferred from homology"/>